<feature type="chain" id="PRO_0000127040" description="Large ribosomal subunit protein eL39">
    <location>
        <begin position="1"/>
        <end position="51"/>
    </location>
</feature>
<feature type="region of interest" description="Disordered" evidence="2">
    <location>
        <begin position="1"/>
        <end position="22"/>
    </location>
</feature>
<protein>
    <recommendedName>
        <fullName evidence="3">Large ribosomal subunit protein eL39</fullName>
    </recommendedName>
    <alternativeName>
        <fullName>60S ribosomal protein L39</fullName>
    </alternativeName>
</protein>
<dbReference type="EMBL" id="CR382139">
    <property type="protein sequence ID" value="CAG90707.1"/>
    <property type="molecule type" value="Genomic_DNA"/>
</dbReference>
<dbReference type="RefSeq" id="XP_462213.1">
    <property type="nucleotide sequence ID" value="XM_462213.1"/>
</dbReference>
<dbReference type="SMR" id="Q6BHV8"/>
<dbReference type="FunCoup" id="Q6BHV8">
    <property type="interactions" value="358"/>
</dbReference>
<dbReference type="STRING" id="284592.Q6BHV8"/>
<dbReference type="GeneID" id="2905135"/>
<dbReference type="KEGG" id="dha:DEHA2G15422g"/>
<dbReference type="VEuPathDB" id="FungiDB:DEHA2G15422g"/>
<dbReference type="eggNOG" id="KOG0002">
    <property type="taxonomic scope" value="Eukaryota"/>
</dbReference>
<dbReference type="HOGENOM" id="CLU_181948_1_2_1"/>
<dbReference type="InParanoid" id="Q6BHV8"/>
<dbReference type="OMA" id="RRTKMNI"/>
<dbReference type="OrthoDB" id="6332053at2759"/>
<dbReference type="Proteomes" id="UP000000599">
    <property type="component" value="Chromosome G"/>
</dbReference>
<dbReference type="GO" id="GO:0022625">
    <property type="term" value="C:cytosolic large ribosomal subunit"/>
    <property type="evidence" value="ECO:0007669"/>
    <property type="project" value="TreeGrafter"/>
</dbReference>
<dbReference type="GO" id="GO:0030684">
    <property type="term" value="C:preribosome"/>
    <property type="evidence" value="ECO:0007669"/>
    <property type="project" value="EnsemblFungi"/>
</dbReference>
<dbReference type="GO" id="GO:0003735">
    <property type="term" value="F:structural constituent of ribosome"/>
    <property type="evidence" value="ECO:0007669"/>
    <property type="project" value="InterPro"/>
</dbReference>
<dbReference type="GO" id="GO:0006412">
    <property type="term" value="P:translation"/>
    <property type="evidence" value="ECO:0007669"/>
    <property type="project" value="InterPro"/>
</dbReference>
<dbReference type="FunFam" id="1.10.1620.10:FF:000001">
    <property type="entry name" value="60S ribosomal protein-like L39"/>
    <property type="match status" value="1"/>
</dbReference>
<dbReference type="Gene3D" id="1.10.1620.10">
    <property type="entry name" value="Ribosomal protein L39e"/>
    <property type="match status" value="1"/>
</dbReference>
<dbReference type="HAMAP" id="MF_00629">
    <property type="entry name" value="Ribosomal_eL39"/>
    <property type="match status" value="1"/>
</dbReference>
<dbReference type="InterPro" id="IPR000077">
    <property type="entry name" value="Ribosomal_eL39"/>
</dbReference>
<dbReference type="InterPro" id="IPR020083">
    <property type="entry name" value="Ribosomal_eL39_CS"/>
</dbReference>
<dbReference type="InterPro" id="IPR023626">
    <property type="entry name" value="Ribosomal_eL39_dom_sf"/>
</dbReference>
<dbReference type="PANTHER" id="PTHR19970:SF0">
    <property type="entry name" value="LARGE RIBOSOMAL SUBUNIT PROTEIN EL39"/>
    <property type="match status" value="1"/>
</dbReference>
<dbReference type="PANTHER" id="PTHR19970">
    <property type="entry name" value="RIBOSOMAL PROTEIN L39E"/>
    <property type="match status" value="1"/>
</dbReference>
<dbReference type="Pfam" id="PF00832">
    <property type="entry name" value="Ribosomal_L39"/>
    <property type="match status" value="1"/>
</dbReference>
<dbReference type="SUPFAM" id="SSF48662">
    <property type="entry name" value="Ribosomal protein L39e"/>
    <property type="match status" value="1"/>
</dbReference>
<dbReference type="PROSITE" id="PS00051">
    <property type="entry name" value="RIBOSOMAL_L39E"/>
    <property type="match status" value="1"/>
</dbReference>
<sequence length="51" mass="6287">MPSQKSFRTKQKLAKAQKQNRPLPQWIRLRSGNTIRYNAKRRHWRRTKLNI</sequence>
<evidence type="ECO:0000250" key="1">
    <source>
        <dbReference type="UniProtKB" id="P04650"/>
    </source>
</evidence>
<evidence type="ECO:0000256" key="2">
    <source>
        <dbReference type="SAM" id="MobiDB-lite"/>
    </source>
</evidence>
<evidence type="ECO:0000305" key="3"/>
<keyword id="KW-1185">Reference proteome</keyword>
<keyword id="KW-0687">Ribonucleoprotein</keyword>
<keyword id="KW-0689">Ribosomal protein</keyword>
<comment type="subunit">
    <text evidence="1">Interacts with YIH1.</text>
</comment>
<comment type="similarity">
    <text evidence="3">Belongs to the eukaryotic ribosomal protein eL39 family.</text>
</comment>
<name>RL39_DEBHA</name>
<reference key="1">
    <citation type="journal article" date="2004" name="Nature">
        <title>Genome evolution in yeasts.</title>
        <authorList>
            <person name="Dujon B."/>
            <person name="Sherman D."/>
            <person name="Fischer G."/>
            <person name="Durrens P."/>
            <person name="Casaregola S."/>
            <person name="Lafontaine I."/>
            <person name="de Montigny J."/>
            <person name="Marck C."/>
            <person name="Neuveglise C."/>
            <person name="Talla E."/>
            <person name="Goffard N."/>
            <person name="Frangeul L."/>
            <person name="Aigle M."/>
            <person name="Anthouard V."/>
            <person name="Babour A."/>
            <person name="Barbe V."/>
            <person name="Barnay S."/>
            <person name="Blanchin S."/>
            <person name="Beckerich J.-M."/>
            <person name="Beyne E."/>
            <person name="Bleykasten C."/>
            <person name="Boisrame A."/>
            <person name="Boyer J."/>
            <person name="Cattolico L."/>
            <person name="Confanioleri F."/>
            <person name="de Daruvar A."/>
            <person name="Despons L."/>
            <person name="Fabre E."/>
            <person name="Fairhead C."/>
            <person name="Ferry-Dumazet H."/>
            <person name="Groppi A."/>
            <person name="Hantraye F."/>
            <person name="Hennequin C."/>
            <person name="Jauniaux N."/>
            <person name="Joyet P."/>
            <person name="Kachouri R."/>
            <person name="Kerrest A."/>
            <person name="Koszul R."/>
            <person name="Lemaire M."/>
            <person name="Lesur I."/>
            <person name="Ma L."/>
            <person name="Muller H."/>
            <person name="Nicaud J.-M."/>
            <person name="Nikolski M."/>
            <person name="Oztas S."/>
            <person name="Ozier-Kalogeropoulos O."/>
            <person name="Pellenz S."/>
            <person name="Potier S."/>
            <person name="Richard G.-F."/>
            <person name="Straub M.-L."/>
            <person name="Suleau A."/>
            <person name="Swennen D."/>
            <person name="Tekaia F."/>
            <person name="Wesolowski-Louvel M."/>
            <person name="Westhof E."/>
            <person name="Wirth B."/>
            <person name="Zeniou-Meyer M."/>
            <person name="Zivanovic Y."/>
            <person name="Bolotin-Fukuhara M."/>
            <person name="Thierry A."/>
            <person name="Bouchier C."/>
            <person name="Caudron B."/>
            <person name="Scarpelli C."/>
            <person name="Gaillardin C."/>
            <person name="Weissenbach J."/>
            <person name="Wincker P."/>
            <person name="Souciet J.-L."/>
        </authorList>
    </citation>
    <scope>NUCLEOTIDE SEQUENCE [LARGE SCALE GENOMIC DNA]</scope>
    <source>
        <strain>ATCC 36239 / CBS 767 / BCRC 21394 / JCM 1990 / NBRC 0083 / IGC 2968</strain>
    </source>
</reference>
<accession>Q6BHV8</accession>
<gene>
    <name type="primary">RPL39</name>
    <name type="ordered locus">DEHA2G15422g</name>
</gene>
<proteinExistence type="inferred from homology"/>
<organism>
    <name type="scientific">Debaryomyces hansenii (strain ATCC 36239 / CBS 767 / BCRC 21394 / JCM 1990 / NBRC 0083 / IGC 2968)</name>
    <name type="common">Yeast</name>
    <name type="synonym">Torulaspora hansenii</name>
    <dbReference type="NCBI Taxonomy" id="284592"/>
    <lineage>
        <taxon>Eukaryota</taxon>
        <taxon>Fungi</taxon>
        <taxon>Dikarya</taxon>
        <taxon>Ascomycota</taxon>
        <taxon>Saccharomycotina</taxon>
        <taxon>Pichiomycetes</taxon>
        <taxon>Debaryomycetaceae</taxon>
        <taxon>Debaryomyces</taxon>
    </lineage>
</organism>